<name>S1FA_MAIZE</name>
<accession>P42554</accession>
<proteinExistence type="evidence at transcript level"/>
<keyword id="KW-0238">DNA-binding</keyword>
<keyword id="KW-0539">Nucleus</keyword>
<keyword id="KW-1185">Reference proteome</keyword>
<keyword id="KW-0678">Repressor</keyword>
<keyword id="KW-0804">Transcription</keyword>
<keyword id="KW-0805">Transcription regulation</keyword>
<reference key="1">
    <citation type="journal article" date="1994" name="Plant Mol. Biol.">
        <title>Partial sequencing and mapping of clones from two maize cDNA libraries.</title>
        <authorList>
            <person name="Shen B."/>
            <person name="Carneiro N."/>
            <person name="Torres-Jerez I."/>
            <person name="Stevenson R."/>
            <person name="McCreery T."/>
            <person name="Helentjaris T."/>
            <person name="Baysdorfer C."/>
            <person name="Almira E."/>
            <person name="Ferl R."/>
            <person name="Habben J."/>
            <person name="Larkins B."/>
        </authorList>
    </citation>
    <scope>NUCLEOTIDE SEQUENCE [MRNA]</scope>
    <source>
        <strain>cv. Wisconsin 64A2</strain>
    </source>
</reference>
<evidence type="ECO:0000250" key="1"/>
<evidence type="ECO:0000255" key="2"/>
<evidence type="ECO:0000256" key="3">
    <source>
        <dbReference type="SAM" id="MobiDB-lite"/>
    </source>
</evidence>
<evidence type="ECO:0000305" key="4"/>
<protein>
    <recommendedName>
        <fullName>DNA-binding protein S1FA</fullName>
    </recommendedName>
</protein>
<gene>
    <name type="primary">S1FA</name>
</gene>
<dbReference type="EMBL" id="T23392">
    <property type="status" value="NOT_ANNOTATED_CDS"/>
    <property type="molecule type" value="mRNA"/>
</dbReference>
<dbReference type="STRING" id="4577.P42554"/>
<dbReference type="PaxDb" id="4577-GRMZM2G056929_P02"/>
<dbReference type="MaizeGDB" id="102210"/>
<dbReference type="eggNOG" id="ENOG502S3X9">
    <property type="taxonomic scope" value="Eukaryota"/>
</dbReference>
<dbReference type="InParanoid" id="P42554"/>
<dbReference type="Proteomes" id="UP000007305">
    <property type="component" value="Unplaced"/>
</dbReference>
<dbReference type="GO" id="GO:0005634">
    <property type="term" value="C:nucleus"/>
    <property type="evidence" value="ECO:0007669"/>
    <property type="project" value="UniProtKB-SubCell"/>
</dbReference>
<dbReference type="GO" id="GO:0003677">
    <property type="term" value="F:DNA binding"/>
    <property type="evidence" value="ECO:0007669"/>
    <property type="project" value="UniProtKB-KW"/>
</dbReference>
<dbReference type="GO" id="GO:0006355">
    <property type="term" value="P:regulation of DNA-templated transcription"/>
    <property type="evidence" value="ECO:0007669"/>
    <property type="project" value="InterPro"/>
</dbReference>
<dbReference type="InterPro" id="IPR006779">
    <property type="entry name" value="S1FA_DNA-bd"/>
</dbReference>
<dbReference type="PANTHER" id="PTHR35298:SF11">
    <property type="entry name" value="DNA-BINDING PROTEIN S1FA1-RELATED"/>
    <property type="match status" value="1"/>
</dbReference>
<dbReference type="PANTHER" id="PTHR35298">
    <property type="entry name" value="DNA-BINDING PROTEIN S1FA2"/>
    <property type="match status" value="1"/>
</dbReference>
<dbReference type="Pfam" id="PF04689">
    <property type="entry name" value="S1FA"/>
    <property type="match status" value="1"/>
</dbReference>
<feature type="chain" id="PRO_0000132716" description="DNA-binding protein S1FA">
    <location>
        <begin position="1" status="less than"/>
        <end position="63"/>
    </location>
</feature>
<feature type="region of interest" description="Disordered" evidence="3">
    <location>
        <begin position="38"/>
        <end position="63"/>
    </location>
</feature>
<feature type="short sequence motif" description="Nuclear localization signal" evidence="2">
    <location>
        <begin position="37"/>
        <end position="42"/>
    </location>
</feature>
<feature type="compositionally biased region" description="Basic residues" evidence="3">
    <location>
        <begin position="38"/>
        <end position="53"/>
    </location>
</feature>
<feature type="non-terminal residue">
    <location>
        <position position="1"/>
    </location>
</feature>
<sequence length="63" mass="6956">NKGLNPGMVVXLVVASFLLIFFVGNYALYXYAQKTLPPKKKKPVSKKKLKKEKLKQGVSAPGE</sequence>
<organism>
    <name type="scientific">Zea mays</name>
    <name type="common">Maize</name>
    <dbReference type="NCBI Taxonomy" id="4577"/>
    <lineage>
        <taxon>Eukaryota</taxon>
        <taxon>Viridiplantae</taxon>
        <taxon>Streptophyta</taxon>
        <taxon>Embryophyta</taxon>
        <taxon>Tracheophyta</taxon>
        <taxon>Spermatophyta</taxon>
        <taxon>Magnoliopsida</taxon>
        <taxon>Liliopsida</taxon>
        <taxon>Poales</taxon>
        <taxon>Poaceae</taxon>
        <taxon>PACMAD clade</taxon>
        <taxon>Panicoideae</taxon>
        <taxon>Andropogonodae</taxon>
        <taxon>Andropogoneae</taxon>
        <taxon>Tripsacinae</taxon>
        <taxon>Zea</taxon>
    </lineage>
</organism>
<comment type="function">
    <text evidence="1">DNA-binding protein that specifically recognizes a negative element (S1F) within the RPS1 promoter.</text>
</comment>
<comment type="subcellular location">
    <subcellularLocation>
        <location evidence="4">Nucleus</location>
    </subcellularLocation>
</comment>
<comment type="similarity">
    <text evidence="4">Belongs to the S1FA transcription factor family.</text>
</comment>